<sequence>MSEPIENLTVDAELDAVGLFCPEPVMMLHQKVRDLPAGGLLKVIATDPSTRRDIPKFCVFLGHELVAEQAEEGTFLYWIRKKSD</sequence>
<proteinExistence type="inferred from homology"/>
<comment type="function">
    <text evidence="1">Sulfur carrier protein which probably makes part of a sulfur-relay system.</text>
</comment>
<comment type="subcellular location">
    <subcellularLocation>
        <location evidence="1">Cytoplasm</location>
    </subcellularLocation>
</comment>
<comment type="similarity">
    <text evidence="1">Belongs to the sulfur carrier protein TusA family.</text>
</comment>
<reference key="1">
    <citation type="journal article" date="2005" name="Proc. Natl. Acad. Sci. U.S.A.">
        <title>Comparison of the complete genome sequences of Pseudomonas syringae pv. syringae B728a and pv. tomato DC3000.</title>
        <authorList>
            <person name="Feil H."/>
            <person name="Feil W.S."/>
            <person name="Chain P."/>
            <person name="Larimer F."/>
            <person name="Dibartolo G."/>
            <person name="Copeland A."/>
            <person name="Lykidis A."/>
            <person name="Trong S."/>
            <person name="Nolan M."/>
            <person name="Goltsman E."/>
            <person name="Thiel J."/>
            <person name="Malfatti S."/>
            <person name="Loper J.E."/>
            <person name="Lapidus A."/>
            <person name="Detter J.C."/>
            <person name="Land M."/>
            <person name="Richardson P.M."/>
            <person name="Kyrpides N.C."/>
            <person name="Ivanova N."/>
            <person name="Lindow S.E."/>
        </authorList>
    </citation>
    <scope>NUCLEOTIDE SEQUENCE [LARGE SCALE GENOMIC DNA]</scope>
    <source>
        <strain>B728a</strain>
    </source>
</reference>
<organism>
    <name type="scientific">Pseudomonas syringae pv. syringae (strain B728a)</name>
    <dbReference type="NCBI Taxonomy" id="205918"/>
    <lineage>
        <taxon>Bacteria</taxon>
        <taxon>Pseudomonadati</taxon>
        <taxon>Pseudomonadota</taxon>
        <taxon>Gammaproteobacteria</taxon>
        <taxon>Pseudomonadales</taxon>
        <taxon>Pseudomonadaceae</taxon>
        <taxon>Pseudomonas</taxon>
        <taxon>Pseudomonas syringae</taxon>
    </lineage>
</organism>
<gene>
    <name evidence="1" type="primary">tusA</name>
    <name type="ordered locus">Psyr_1827</name>
</gene>
<keyword id="KW-0963">Cytoplasm</keyword>
<name>TUSA_PSEU2</name>
<evidence type="ECO:0000255" key="1">
    <source>
        <dbReference type="HAMAP-Rule" id="MF_00413"/>
    </source>
</evidence>
<accession>Q4ZVE8</accession>
<feature type="chain" id="PRO_0000234123" description="Sulfur carrier protein TusA">
    <location>
        <begin position="1"/>
        <end position="84"/>
    </location>
</feature>
<feature type="active site" description="Cysteine persulfide intermediate" evidence="1">
    <location>
        <position position="21"/>
    </location>
</feature>
<dbReference type="EMBL" id="CP000075">
    <property type="protein sequence ID" value="AAY36874.1"/>
    <property type="molecule type" value="Genomic_DNA"/>
</dbReference>
<dbReference type="RefSeq" id="WP_003371482.1">
    <property type="nucleotide sequence ID" value="NC_007005.1"/>
</dbReference>
<dbReference type="RefSeq" id="YP_234912.1">
    <property type="nucleotide sequence ID" value="NC_007005.1"/>
</dbReference>
<dbReference type="SMR" id="Q4ZVE8"/>
<dbReference type="STRING" id="205918.Psyr_1827"/>
<dbReference type="KEGG" id="psb:Psyr_1827"/>
<dbReference type="PATRIC" id="fig|205918.7.peg.1871"/>
<dbReference type="eggNOG" id="COG0425">
    <property type="taxonomic scope" value="Bacteria"/>
</dbReference>
<dbReference type="HOGENOM" id="CLU_165255_5_1_6"/>
<dbReference type="OrthoDB" id="9797352at2"/>
<dbReference type="Proteomes" id="UP000000426">
    <property type="component" value="Chromosome"/>
</dbReference>
<dbReference type="GO" id="GO:0005737">
    <property type="term" value="C:cytoplasm"/>
    <property type="evidence" value="ECO:0007669"/>
    <property type="project" value="UniProtKB-SubCell"/>
</dbReference>
<dbReference type="GO" id="GO:0097163">
    <property type="term" value="F:sulfur carrier activity"/>
    <property type="evidence" value="ECO:0007669"/>
    <property type="project" value="UniProtKB-UniRule"/>
</dbReference>
<dbReference type="GO" id="GO:0002143">
    <property type="term" value="P:tRNA wobble position uridine thiolation"/>
    <property type="evidence" value="ECO:0007669"/>
    <property type="project" value="InterPro"/>
</dbReference>
<dbReference type="CDD" id="cd03423">
    <property type="entry name" value="SirA"/>
    <property type="match status" value="1"/>
</dbReference>
<dbReference type="Gene3D" id="3.30.110.40">
    <property type="entry name" value="TusA-like domain"/>
    <property type="match status" value="1"/>
</dbReference>
<dbReference type="HAMAP" id="MF_00413">
    <property type="entry name" value="Thiourid_synth_A"/>
    <property type="match status" value="1"/>
</dbReference>
<dbReference type="InterPro" id="IPR022931">
    <property type="entry name" value="Sulphur_carrier_TusA"/>
</dbReference>
<dbReference type="InterPro" id="IPR001455">
    <property type="entry name" value="TusA-like"/>
</dbReference>
<dbReference type="InterPro" id="IPR036868">
    <property type="entry name" value="TusA-like_sf"/>
</dbReference>
<dbReference type="NCBIfam" id="NF001423">
    <property type="entry name" value="PRK00299.1"/>
    <property type="match status" value="1"/>
</dbReference>
<dbReference type="PANTHER" id="PTHR33279:SF2">
    <property type="entry name" value="SULFUR CARRIER PROTEIN TUSA"/>
    <property type="match status" value="1"/>
</dbReference>
<dbReference type="PANTHER" id="PTHR33279">
    <property type="entry name" value="SULFUR CARRIER PROTEIN YEDF-RELATED"/>
    <property type="match status" value="1"/>
</dbReference>
<dbReference type="Pfam" id="PF01206">
    <property type="entry name" value="TusA"/>
    <property type="match status" value="1"/>
</dbReference>
<dbReference type="SUPFAM" id="SSF64307">
    <property type="entry name" value="SirA-like"/>
    <property type="match status" value="1"/>
</dbReference>
<dbReference type="PROSITE" id="PS01148">
    <property type="entry name" value="UPF0033"/>
    <property type="match status" value="1"/>
</dbReference>
<protein>
    <recommendedName>
        <fullName evidence="1">Sulfur carrier protein TusA</fullName>
    </recommendedName>
</protein>